<keyword id="KW-0167">Capsid protein</keyword>
<keyword id="KW-1185">Reference proteome</keyword>
<keyword id="KW-0946">Virion</keyword>
<organism>
    <name type="scientific">Potato mop-top virus (isolate Potato/Sweden/Sw)</name>
    <name type="common">PMTV</name>
    <dbReference type="NCBI Taxonomy" id="652839"/>
    <lineage>
        <taxon>Viruses</taxon>
        <taxon>Riboviria</taxon>
        <taxon>Orthornavirae</taxon>
        <taxon>Kitrinoviricota</taxon>
        <taxon>Alsuviricetes</taxon>
        <taxon>Martellivirales</taxon>
        <taxon>Virgaviridae</taxon>
        <taxon>Pomovirus</taxon>
        <taxon>Potato mop-top virus</taxon>
    </lineage>
</organism>
<organismHost>
    <name type="scientific">Solanum nigrum</name>
    <name type="common">Black nightshade</name>
    <dbReference type="NCBI Taxonomy" id="4112"/>
</organismHost>
<organismHost>
    <name type="scientific">Solanum tuberosum</name>
    <name type="common">Potato</name>
    <dbReference type="NCBI Taxonomy" id="4113"/>
</organismHost>
<protein>
    <recommendedName>
        <fullName>91 kDa readthrough protein</fullName>
    </recommendedName>
    <alternativeName>
        <fullName>CP-RT</fullName>
    </alternativeName>
</protein>
<comment type="function">
    <text evidence="1 3">Minor capsid protein involved in virus transmission by the vector Polymyxa.</text>
</comment>
<comment type="subcellular location">
    <subcellularLocation>
        <location evidence="2">Virion</location>
    </subcellularLocation>
    <text>Associated with one extremity of viral particles.</text>
</comment>
<comment type="miscellaneous">
    <text>This protein is translated as a fusion protein by episodic readthrough of the termination codon at the end of the capsid protein. Readthrough of the terminator codon TAG occurs between the codons for Ala-176 and Gln-178, thereby producing the 91 kDa readthrough protein.</text>
</comment>
<comment type="similarity">
    <text evidence="4">Belongs to the virgaviridae capsid protein family.</text>
</comment>
<proteinExistence type="inferred from homology"/>
<name>CPRT_PMTVS</name>
<evidence type="ECO:0000269" key="1">
    <source>
    </source>
</evidence>
<evidence type="ECO:0000269" key="2">
    <source>
    </source>
</evidence>
<evidence type="ECO:0000269" key="3">
    <source>
    </source>
</evidence>
<evidence type="ECO:0000305" key="4"/>
<accession>P0CK18</accession>
<dbReference type="EMBL" id="AJ243719">
    <property type="status" value="NOT_ANNOTATED_CDS"/>
    <property type="molecule type" value="Genomic_RNA"/>
</dbReference>
<dbReference type="Proteomes" id="UP000006715">
    <property type="component" value="Genome"/>
</dbReference>
<dbReference type="GO" id="GO:0019028">
    <property type="term" value="C:viral capsid"/>
    <property type="evidence" value="ECO:0007669"/>
    <property type="project" value="UniProtKB-KW"/>
</dbReference>
<dbReference type="GO" id="GO:0005198">
    <property type="term" value="F:structural molecule activity"/>
    <property type="evidence" value="ECO:0007669"/>
    <property type="project" value="InterPro"/>
</dbReference>
<dbReference type="Gene3D" id="1.20.120.70">
    <property type="entry name" value="Tobacco mosaic virus-like, coat protein"/>
    <property type="match status" value="1"/>
</dbReference>
<dbReference type="InterPro" id="IPR001337">
    <property type="entry name" value="TMV-like_coat"/>
</dbReference>
<dbReference type="InterPro" id="IPR036417">
    <property type="entry name" value="TMV-like_coat_sf"/>
</dbReference>
<dbReference type="Pfam" id="PF00721">
    <property type="entry name" value="TMV_coat"/>
    <property type="match status" value="1"/>
</dbReference>
<feature type="chain" id="PRO_0000409454" description="91 kDa readthrough protein">
    <location>
        <begin position="1"/>
        <end position="825"/>
    </location>
</feature>
<gene>
    <name type="primary">CP-CP2</name>
</gene>
<sequence>MAENRGERRAAVENRYDAWDHEQAMKAAVRKFISYDQFSAQLRNWREARLNIIEHATSVLSQVSNLGRTHFYSRTERFGGSSLVGDKLYVCLNETRMKTALNNIIVALQTVNGEGRARRLGPREASANTGGEDSALNVAHQLAEVDDLLTDESFLREAVFTQDKYELVNGLRWAGAXQLTAQAFWFDVNAAIDEIDNRLLAAAALRLLPGQANHVDGLVSINYAQLDRALSVVGGNILPQTLEITRDERKRQLPEVRVIDGERVTIRNKDEATVIRNHGQGLPWLLAFLLLLLSVVVVYSTIYLNDWLYRLSVVRHGKPGGGAARKLSGMSDWLCSRLRARGALNVNRMRKKQACDPSPTGLRKFLTCYNFSYELWDPTGSYDDAQRRIIAEQNSFVEAVRAIDEGDRELAEACLTNVRRILRRHLNYRPDYFDIIEAKAVYLVTVLTNAMSGPVVGVDDDERRAVVAAFNPSDCGLPNLDSCSLDEIKNFDLSEVVIGEGTNVEQARGYLNLCRNIQCMIETIGTVQFLGVLSSYTGPQYPCISQAFAEDKRIRKERLKDKDNITTADIIAYLVSGVMVAYALVAVSKGGITLFKFMKNYAGGGGDRPGSSRRIRQLEAALPSLPQPEELTMMERLRRPQSSDNDLALRRNPSDMLSQVVRDVVADVDSSDIAESLNDPARMTEAALEIRLTRIMSAEGSPVDVIEPGGQELISMQVHGESLTVINAGTDSPTVIRSASLSTRHRSSGIEIGSFAVDKVLPYEVEGENDDHGDAGKKPTVAQALMIGGGAVKGQGNLGVTNGKELLKVLGSSRSIGKMSGKMAV</sequence>
<reference key="1">
    <citation type="journal article" date="2001" name="Arch. Virol.">
        <title>The readthrough region of Potato mop-top virus (PMTV) coat protein encoding RNA, the second largest RNA of PMTV genome, undergoes structural changes in naturally infected and experimentally inoculated plants.</title>
        <authorList>
            <person name="Sandgren M."/>
            <person name="Savenkov E.I."/>
            <person name="Valkonen J.P."/>
        </authorList>
    </citation>
    <scope>NUCLEOTIDE SEQUENCE [GENOMIC RNA]</scope>
</reference>
<reference key="2">
    <citation type="journal article" date="1997" name="J. Gen. Virol.">
        <title>Detection of potato mop-top virus capsid readthrough protein in virus particles.</title>
        <authorList>
            <person name="Cowan G.H."/>
            <person name="Torrance L."/>
            <person name="Reavy B."/>
        </authorList>
    </citation>
    <scope>SUBCELLULAR LOCATION</scope>
</reference>
<reference key="3">
    <citation type="journal article" date="1998" name="J. Gen. Virol.">
        <title>Association of sequences in the coat protein/readthrough domain of potato mop-top virus with transmission by Spongospora subterranea.</title>
        <authorList>
            <person name="Reavy B."/>
            <person name="Arif M."/>
            <person name="Cowan G.H."/>
            <person name="Torrance L."/>
        </authorList>
    </citation>
    <scope>FUNCTION</scope>
</reference>
<reference key="4">
    <citation type="journal article" date="2009" name="Mol. Plant Microbe Interact.">
        <title>Unusual long-distance movement strategies of Potato mop-top virus RNAs in Nicotiana benthamiana.</title>
        <authorList>
            <person name="Torrance L."/>
            <person name="Lukhovitskaya N.I."/>
            <person name="Schepetilnikov M.V."/>
            <person name="Cowan G.H."/>
            <person name="Ziegler A."/>
            <person name="Savenkov E.I."/>
        </authorList>
    </citation>
    <scope>FUNCTION</scope>
</reference>